<organism>
    <name type="scientific">Mycoplasma pneumoniae (strain ATCC 29342 / M129 / Subtype 1)</name>
    <name type="common">Mycoplasmoides pneumoniae</name>
    <dbReference type="NCBI Taxonomy" id="272634"/>
    <lineage>
        <taxon>Bacteria</taxon>
        <taxon>Bacillati</taxon>
        <taxon>Mycoplasmatota</taxon>
        <taxon>Mycoplasmoidales</taxon>
        <taxon>Mycoplasmoidaceae</taxon>
        <taxon>Mycoplasmoides</taxon>
    </lineage>
</organism>
<protein>
    <recommendedName>
        <fullName>Putative ABC transporter ATP-binding protein MG015 homolog</fullName>
    </recommendedName>
</protein>
<sequence>MLSSCRAVTSMSRWSKHKKTKEVISMLSHNQKPNSWKILWRLIKSVQGRTSSKVLYVMVCAIFGILTGVTNSILLAQGLGFIFPTTNTETDGIQSVYLLVFAHNLPVMERLTIVCVTVVVAYILIFSFNVAQNYLGLKLYQEICALLRWKAYLKIQSMSTSFFDTQNNGDLMSRLTNDVYNINNLYAQVGGQTIQSLFILMTTATILFVLSPVIALISLTVLIALIALSFLFLKKARAAYAKVQNNLGDMSGYIEEVLSNHKVVHVLKLQEVMIDNFDKYNRPMVNPTIKANTYAVFIYSWFGFISNITYLASISIATAFSVNNIPSFGVSAINYSFMLSYIAALRQTALPLNQIFSLWNLIQLGIVSGERVFKILDLESPQKQATITKLPNIKGNIRFEKVVFGYSADKPILTGIDFSVKHGDIVAIVGPTGAGKSTIINLLMKFYKPFAGKIYMDNFEISEVSETAWREKISIVLQDPFLFSGTIKENIRMGRQDATDEEIIEACKVANAHDFIMRLPQGYNTFISNKTDYLSVGERQLLTIARAVIRNAPVLLLDEATSSIDVHSEKLIQQSIGRLMKDKTSFIISHRLSIIRNATLIIVINDGKVLEMGNHEQLMRQNGFYARLKRSAVK</sequence>
<name>Y019_MYCPN</name>
<accession>P75094</accession>
<feature type="chain" id="PRO_0000093238" description="Putative ABC transporter ATP-binding protein MG015 homolog">
    <location>
        <begin position="1"/>
        <end position="634"/>
    </location>
</feature>
<feature type="transmembrane region" description="Helical" evidence="2">
    <location>
        <begin position="54"/>
        <end position="74"/>
    </location>
</feature>
<feature type="transmembrane region" description="Helical" evidence="2">
    <location>
        <begin position="111"/>
        <end position="131"/>
    </location>
</feature>
<feature type="transmembrane region" description="Helical" evidence="2">
    <location>
        <begin position="189"/>
        <end position="209"/>
    </location>
</feature>
<feature type="transmembrane region" description="Helical" evidence="2">
    <location>
        <begin position="213"/>
        <end position="233"/>
    </location>
</feature>
<feature type="transmembrane region" description="Helical" evidence="2">
    <location>
        <begin position="296"/>
        <end position="316"/>
    </location>
</feature>
<feature type="transmembrane region" description="Helical" evidence="2">
    <location>
        <begin position="325"/>
        <end position="345"/>
    </location>
</feature>
<feature type="domain" description="ABC transmembrane type-1" evidence="2">
    <location>
        <begin position="54"/>
        <end position="364"/>
    </location>
</feature>
<feature type="domain" description="ABC transporter" evidence="1">
    <location>
        <begin position="397"/>
        <end position="631"/>
    </location>
</feature>
<feature type="binding site" evidence="1">
    <location>
        <begin position="430"/>
        <end position="437"/>
    </location>
    <ligand>
        <name>ATP</name>
        <dbReference type="ChEBI" id="CHEBI:30616"/>
    </ligand>
</feature>
<evidence type="ECO:0000255" key="1">
    <source>
        <dbReference type="PROSITE-ProRule" id="PRU00434"/>
    </source>
</evidence>
<evidence type="ECO:0000255" key="2">
    <source>
        <dbReference type="PROSITE-ProRule" id="PRU00441"/>
    </source>
</evidence>
<evidence type="ECO:0000305" key="3"/>
<dbReference type="EMBL" id="U00089">
    <property type="protein sequence ID" value="AAB95783.1"/>
    <property type="molecule type" value="Genomic_DNA"/>
</dbReference>
<dbReference type="PIR" id="S73461">
    <property type="entry name" value="S73461"/>
</dbReference>
<dbReference type="RefSeq" id="NP_109707.1">
    <property type="nucleotide sequence ID" value="NC_000912.1"/>
</dbReference>
<dbReference type="RefSeq" id="WP_010874376.1">
    <property type="nucleotide sequence ID" value="NC_000912.1"/>
</dbReference>
<dbReference type="SMR" id="P75094"/>
<dbReference type="STRING" id="272634.MPN_019"/>
<dbReference type="EnsemblBacteria" id="AAB95783">
    <property type="protein sequence ID" value="AAB95783"/>
    <property type="gene ID" value="MPN_019"/>
</dbReference>
<dbReference type="KEGG" id="mpn:MPN_019"/>
<dbReference type="PATRIC" id="fig|272634.6.peg.18"/>
<dbReference type="HOGENOM" id="CLU_000604_84_3_14"/>
<dbReference type="OrthoDB" id="383768at2"/>
<dbReference type="BioCyc" id="MPNE272634:G1GJ3-29-MONOMER"/>
<dbReference type="Proteomes" id="UP000000808">
    <property type="component" value="Chromosome"/>
</dbReference>
<dbReference type="GO" id="GO:0005886">
    <property type="term" value="C:plasma membrane"/>
    <property type="evidence" value="ECO:0007669"/>
    <property type="project" value="UniProtKB-SubCell"/>
</dbReference>
<dbReference type="GO" id="GO:0140359">
    <property type="term" value="F:ABC-type transporter activity"/>
    <property type="evidence" value="ECO:0007669"/>
    <property type="project" value="InterPro"/>
</dbReference>
<dbReference type="GO" id="GO:0005524">
    <property type="term" value="F:ATP binding"/>
    <property type="evidence" value="ECO:0007669"/>
    <property type="project" value="UniProtKB-KW"/>
</dbReference>
<dbReference type="GO" id="GO:0016887">
    <property type="term" value="F:ATP hydrolysis activity"/>
    <property type="evidence" value="ECO:0007669"/>
    <property type="project" value="InterPro"/>
</dbReference>
<dbReference type="GO" id="GO:0034040">
    <property type="term" value="F:ATPase-coupled lipid transmembrane transporter activity"/>
    <property type="evidence" value="ECO:0007669"/>
    <property type="project" value="TreeGrafter"/>
</dbReference>
<dbReference type="CDD" id="cd18547">
    <property type="entry name" value="ABC_6TM_Tm288_like"/>
    <property type="match status" value="1"/>
</dbReference>
<dbReference type="CDD" id="cd03254">
    <property type="entry name" value="ABCC_Glucan_exporter_like"/>
    <property type="match status" value="1"/>
</dbReference>
<dbReference type="FunFam" id="3.40.50.300:FF:000287">
    <property type="entry name" value="Multidrug ABC transporter ATP-binding protein"/>
    <property type="match status" value="1"/>
</dbReference>
<dbReference type="Gene3D" id="1.20.1560.10">
    <property type="entry name" value="ABC transporter type 1, transmembrane domain"/>
    <property type="match status" value="1"/>
</dbReference>
<dbReference type="Gene3D" id="3.40.50.300">
    <property type="entry name" value="P-loop containing nucleotide triphosphate hydrolases"/>
    <property type="match status" value="1"/>
</dbReference>
<dbReference type="InterPro" id="IPR003593">
    <property type="entry name" value="AAA+_ATPase"/>
</dbReference>
<dbReference type="InterPro" id="IPR011527">
    <property type="entry name" value="ABC1_TM_dom"/>
</dbReference>
<dbReference type="InterPro" id="IPR036640">
    <property type="entry name" value="ABC1_TM_sf"/>
</dbReference>
<dbReference type="InterPro" id="IPR003439">
    <property type="entry name" value="ABC_transporter-like_ATP-bd"/>
</dbReference>
<dbReference type="InterPro" id="IPR017871">
    <property type="entry name" value="ABC_transporter-like_CS"/>
</dbReference>
<dbReference type="InterPro" id="IPR027417">
    <property type="entry name" value="P-loop_NTPase"/>
</dbReference>
<dbReference type="InterPro" id="IPR039421">
    <property type="entry name" value="Type_1_exporter"/>
</dbReference>
<dbReference type="PANTHER" id="PTHR24221">
    <property type="entry name" value="ATP-BINDING CASSETTE SUB-FAMILY B"/>
    <property type="match status" value="1"/>
</dbReference>
<dbReference type="PANTHER" id="PTHR24221:SF654">
    <property type="entry name" value="ATP-BINDING CASSETTE SUB-FAMILY B MEMBER 6"/>
    <property type="match status" value="1"/>
</dbReference>
<dbReference type="Pfam" id="PF00664">
    <property type="entry name" value="ABC_membrane"/>
    <property type="match status" value="1"/>
</dbReference>
<dbReference type="Pfam" id="PF00005">
    <property type="entry name" value="ABC_tran"/>
    <property type="match status" value="1"/>
</dbReference>
<dbReference type="SMART" id="SM00382">
    <property type="entry name" value="AAA"/>
    <property type="match status" value="1"/>
</dbReference>
<dbReference type="SUPFAM" id="SSF90123">
    <property type="entry name" value="ABC transporter transmembrane region"/>
    <property type="match status" value="1"/>
</dbReference>
<dbReference type="SUPFAM" id="SSF52540">
    <property type="entry name" value="P-loop containing nucleoside triphosphate hydrolases"/>
    <property type="match status" value="1"/>
</dbReference>
<dbReference type="PROSITE" id="PS50929">
    <property type="entry name" value="ABC_TM1F"/>
    <property type="match status" value="1"/>
</dbReference>
<dbReference type="PROSITE" id="PS00211">
    <property type="entry name" value="ABC_TRANSPORTER_1"/>
    <property type="match status" value="1"/>
</dbReference>
<dbReference type="PROSITE" id="PS50893">
    <property type="entry name" value="ABC_TRANSPORTER_2"/>
    <property type="match status" value="1"/>
</dbReference>
<keyword id="KW-0067">ATP-binding</keyword>
<keyword id="KW-1003">Cell membrane</keyword>
<keyword id="KW-0472">Membrane</keyword>
<keyword id="KW-0547">Nucleotide-binding</keyword>
<keyword id="KW-1185">Reference proteome</keyword>
<keyword id="KW-0812">Transmembrane</keyword>
<keyword id="KW-1133">Transmembrane helix</keyword>
<keyword id="KW-0813">Transport</keyword>
<gene>
    <name type="ordered locus">MPN_019</name>
    <name type="ORF">D12_orf634</name>
    <name type="ORF">MP135</name>
</gene>
<reference key="1">
    <citation type="journal article" date="1996" name="Nucleic Acids Res.">
        <title>Complete sequence analysis of the genome of the bacterium Mycoplasma pneumoniae.</title>
        <authorList>
            <person name="Himmelreich R."/>
            <person name="Hilbert H."/>
            <person name="Plagens H."/>
            <person name="Pirkl E."/>
            <person name="Li B.-C."/>
            <person name="Herrmann R."/>
        </authorList>
    </citation>
    <scope>NUCLEOTIDE SEQUENCE [LARGE SCALE GENOMIC DNA]</scope>
    <source>
        <strain>ATCC 29342 / M129 / Subtype 1</strain>
    </source>
</reference>
<proteinExistence type="inferred from homology"/>
<comment type="subcellular location">
    <subcellularLocation>
        <location evidence="3">Cell membrane</location>
        <topology evidence="2">Multi-pass membrane protein</topology>
    </subcellularLocation>
</comment>
<comment type="similarity">
    <text evidence="3">Belongs to the ABC transporter superfamily.</text>
</comment>